<evidence type="ECO:0000255" key="1">
    <source>
        <dbReference type="HAMAP-Rule" id="MF_00294"/>
    </source>
</evidence>
<keyword id="KW-0687">Ribonucleoprotein</keyword>
<keyword id="KW-0689">Ribosomal protein</keyword>
<gene>
    <name evidence="1" type="primary">rpmG1</name>
    <name type="ordered locus">LAR_0294</name>
</gene>
<accession>B2G5S8</accession>
<comment type="similarity">
    <text evidence="1">Belongs to the bacterial ribosomal protein bL33 family.</text>
</comment>
<protein>
    <recommendedName>
        <fullName evidence="1">Large ribosomal subunit protein bL33A</fullName>
    </recommendedName>
    <alternativeName>
        <fullName evidence="1">50S ribosomal protein L33 1</fullName>
    </alternativeName>
</protein>
<feature type="chain" id="PRO_0000356510" description="Large ribosomal subunit protein bL33A">
    <location>
        <begin position="1"/>
        <end position="49"/>
    </location>
</feature>
<reference key="1">
    <citation type="journal article" date="2008" name="DNA Res.">
        <title>Comparative genome analysis of Lactobacillus reuteri and Lactobacillus fermentum reveal a genomic island for reuterin and cobalamin production.</title>
        <authorList>
            <person name="Morita H."/>
            <person name="Toh H."/>
            <person name="Fukuda S."/>
            <person name="Horikawa H."/>
            <person name="Oshima K."/>
            <person name="Suzuki T."/>
            <person name="Murakami M."/>
            <person name="Hisamatsu S."/>
            <person name="Kato Y."/>
            <person name="Takizawa T."/>
            <person name="Fukuoka H."/>
            <person name="Yoshimura T."/>
            <person name="Itoh K."/>
            <person name="O'Sullivan D.J."/>
            <person name="McKay L.L."/>
            <person name="Ohno H."/>
            <person name="Kikuchi J."/>
            <person name="Masaoka T."/>
            <person name="Hattori M."/>
        </authorList>
    </citation>
    <scope>NUCLEOTIDE SEQUENCE [LARGE SCALE GENOMIC DNA]</scope>
    <source>
        <strain>JCM 1112</strain>
    </source>
</reference>
<organism>
    <name type="scientific">Limosilactobacillus reuteri subsp. reuteri (strain JCM 1112)</name>
    <name type="common">Lactobacillus reuteri</name>
    <dbReference type="NCBI Taxonomy" id="557433"/>
    <lineage>
        <taxon>Bacteria</taxon>
        <taxon>Bacillati</taxon>
        <taxon>Bacillota</taxon>
        <taxon>Bacilli</taxon>
        <taxon>Lactobacillales</taxon>
        <taxon>Lactobacillaceae</taxon>
        <taxon>Limosilactobacillus</taxon>
    </lineage>
</organism>
<sequence length="49" mass="5814">MSQKKVALECTKCGARNYTITANPQRQERLELRKFCKHCGEYTIHRESR</sequence>
<proteinExistence type="inferred from homology"/>
<dbReference type="EMBL" id="AP007281">
    <property type="protein sequence ID" value="BAG24810.1"/>
    <property type="molecule type" value="Genomic_DNA"/>
</dbReference>
<dbReference type="SMR" id="B2G5S8"/>
<dbReference type="KEGG" id="lrf:LAR_0294"/>
<dbReference type="HOGENOM" id="CLU_190949_0_1_9"/>
<dbReference type="GO" id="GO:0005737">
    <property type="term" value="C:cytoplasm"/>
    <property type="evidence" value="ECO:0007669"/>
    <property type="project" value="UniProtKB-ARBA"/>
</dbReference>
<dbReference type="GO" id="GO:1990904">
    <property type="term" value="C:ribonucleoprotein complex"/>
    <property type="evidence" value="ECO:0007669"/>
    <property type="project" value="UniProtKB-KW"/>
</dbReference>
<dbReference type="GO" id="GO:0005840">
    <property type="term" value="C:ribosome"/>
    <property type="evidence" value="ECO:0007669"/>
    <property type="project" value="UniProtKB-KW"/>
</dbReference>
<dbReference type="GO" id="GO:0003735">
    <property type="term" value="F:structural constituent of ribosome"/>
    <property type="evidence" value="ECO:0007669"/>
    <property type="project" value="InterPro"/>
</dbReference>
<dbReference type="GO" id="GO:0006412">
    <property type="term" value="P:translation"/>
    <property type="evidence" value="ECO:0007669"/>
    <property type="project" value="UniProtKB-UniRule"/>
</dbReference>
<dbReference type="Gene3D" id="2.20.28.120">
    <property type="entry name" value="Ribosomal protein L33"/>
    <property type="match status" value="1"/>
</dbReference>
<dbReference type="HAMAP" id="MF_00294">
    <property type="entry name" value="Ribosomal_bL33"/>
    <property type="match status" value="1"/>
</dbReference>
<dbReference type="InterPro" id="IPR001705">
    <property type="entry name" value="Ribosomal_bL33"/>
</dbReference>
<dbReference type="InterPro" id="IPR038584">
    <property type="entry name" value="Ribosomal_bL33_sf"/>
</dbReference>
<dbReference type="InterPro" id="IPR011332">
    <property type="entry name" value="Ribosomal_zn-bd"/>
</dbReference>
<dbReference type="NCBIfam" id="NF001764">
    <property type="entry name" value="PRK00504.1"/>
    <property type="match status" value="1"/>
</dbReference>
<dbReference type="NCBIfam" id="TIGR01023">
    <property type="entry name" value="rpmG_bact"/>
    <property type="match status" value="1"/>
</dbReference>
<dbReference type="Pfam" id="PF00471">
    <property type="entry name" value="Ribosomal_L33"/>
    <property type="match status" value="1"/>
</dbReference>
<dbReference type="SUPFAM" id="SSF57829">
    <property type="entry name" value="Zn-binding ribosomal proteins"/>
    <property type="match status" value="1"/>
</dbReference>
<name>RL331_LIMRJ</name>